<gene>
    <name evidence="2" type="primary">arfB</name>
    <name type="ordered locus">Metin_0294</name>
</gene>
<protein>
    <recommendedName>
        <fullName evidence="2">2-amino-5-formylamino-6-ribosylaminopyrimidin-4(3H)-one 5'-monophosphate deformylase</fullName>
        <shortName evidence="2">FAPy deformylase</shortName>
        <ecNumber evidence="2">3.5.1.102</ecNumber>
    </recommendedName>
    <alternativeName>
        <fullName evidence="2">Formamide hydrolase</fullName>
    </alternativeName>
</protein>
<organism>
    <name type="scientific">Methanocaldococcus infernus (strain DSM 11812 / JCM 15783 / ME)</name>
    <dbReference type="NCBI Taxonomy" id="573063"/>
    <lineage>
        <taxon>Archaea</taxon>
        <taxon>Methanobacteriati</taxon>
        <taxon>Methanobacteriota</taxon>
        <taxon>Methanomada group</taxon>
        <taxon>Methanococci</taxon>
        <taxon>Methanococcales</taxon>
        <taxon>Methanocaldococcaceae</taxon>
        <taxon>Methanocaldococcus</taxon>
    </lineage>
</organism>
<comment type="function">
    <text evidence="2">Catalyzes the hydrolysis of the formamide of 2-amino-5-formylamino-6-ribosylamino-4(3H)-pyrimidinone 5'-monophosphate (FAPy) to form 2,5-diamino-6-ribosylamino-4(3H)-pyrimidinone 5'-phosphate (APy).</text>
</comment>
<comment type="catalytic activity">
    <reaction evidence="2">
        <text>2-amino-5-formylamino-6-(5-phospho-D-ribosylamino)pyrimidin-4(3H)-one + H2O = 2,5-diamino-6-(1-D-ribosylamino)pyrimidin-4(3H)-one 5'-phosphate + formate + H(+)</text>
        <dbReference type="Rhea" id="RHEA:27282"/>
        <dbReference type="ChEBI" id="CHEBI:15377"/>
        <dbReference type="ChEBI" id="CHEBI:15378"/>
        <dbReference type="ChEBI" id="CHEBI:15740"/>
        <dbReference type="ChEBI" id="CHEBI:57258"/>
        <dbReference type="ChEBI" id="CHEBI:59545"/>
        <dbReference type="EC" id="3.5.1.102"/>
    </reaction>
</comment>
<comment type="cofactor">
    <cofactor evidence="1">
        <name>Fe(2+)</name>
        <dbReference type="ChEBI" id="CHEBI:29033"/>
    </cofactor>
    <text evidence="1">Requires one Fe(2+) ion for activity.</text>
</comment>
<comment type="cofactor">
    <cofactor evidence="1">
        <name>Fe(2+)</name>
        <dbReference type="ChEBI" id="CHEBI:29033"/>
    </cofactor>
    <cofactor evidence="1">
        <name>Zn(2+)</name>
        <dbReference type="ChEBI" id="CHEBI:29105"/>
    </cofactor>
    <text evidence="1">Requires an additional second metal ion that could be Fe(2+) or Zn(2+).</text>
</comment>
<comment type="pathway">
    <text evidence="2">Cofactor biosynthesis; coenzyme F420 biosynthesis.</text>
</comment>
<comment type="pathway">
    <text evidence="2">Cofactor biosynthesis; riboflavin biosynthesis.</text>
</comment>
<comment type="subunit">
    <text evidence="2">Homodimer.</text>
</comment>
<comment type="similarity">
    <text evidence="2">Belongs to the creatininase superfamily. FAPy deformylase family.</text>
</comment>
<accession>D5VQW1</accession>
<feature type="chain" id="PRO_0000406921" description="2-amino-5-formylamino-6-ribosylaminopyrimidin-4(3H)-one 5'-monophosphate deformylase">
    <location>
        <begin position="1"/>
        <end position="222"/>
    </location>
</feature>
<feature type="binding site" evidence="2">
    <location>
        <position position="29"/>
    </location>
    <ligand>
        <name>Fe cation</name>
        <dbReference type="ChEBI" id="CHEBI:24875"/>
        <label>1</label>
    </ligand>
</feature>
<feature type="binding site" evidence="2">
    <location>
        <position position="31"/>
    </location>
    <ligand>
        <name>Fe cation</name>
        <dbReference type="ChEBI" id="CHEBI:24875"/>
        <label>2</label>
    </ligand>
</feature>
<feature type="binding site" evidence="2">
    <location>
        <position position="40"/>
    </location>
    <ligand>
        <name>Fe cation</name>
        <dbReference type="ChEBI" id="CHEBI:24875"/>
        <label>1</label>
    </ligand>
</feature>
<feature type="binding site" evidence="2">
    <location>
        <position position="40"/>
    </location>
    <ligand>
        <name>Fe cation</name>
        <dbReference type="ChEBI" id="CHEBI:24875"/>
        <label>2</label>
    </ligand>
</feature>
<feature type="binding site" evidence="2">
    <location>
        <position position="108"/>
    </location>
    <ligand>
        <name>Fe cation</name>
        <dbReference type="ChEBI" id="CHEBI:24875"/>
        <label>1</label>
    </ligand>
</feature>
<keyword id="KW-0378">Hydrolase</keyword>
<keyword id="KW-0408">Iron</keyword>
<keyword id="KW-0479">Metal-binding</keyword>
<keyword id="KW-0862">Zinc</keyword>
<dbReference type="EC" id="3.5.1.102" evidence="2"/>
<dbReference type="EMBL" id="CP002009">
    <property type="protein sequence ID" value="ADG12964.1"/>
    <property type="molecule type" value="Genomic_DNA"/>
</dbReference>
<dbReference type="RefSeq" id="WP_013099710.1">
    <property type="nucleotide sequence ID" value="NC_014122.1"/>
</dbReference>
<dbReference type="SMR" id="D5VQW1"/>
<dbReference type="STRING" id="573063.Metin_0294"/>
<dbReference type="GeneID" id="9131294"/>
<dbReference type="KEGG" id="mif:Metin_0294"/>
<dbReference type="eggNOG" id="arCOG04536">
    <property type="taxonomic scope" value="Archaea"/>
</dbReference>
<dbReference type="HOGENOM" id="CLU_1192640_0_0_2"/>
<dbReference type="OrthoDB" id="46121at2157"/>
<dbReference type="UniPathway" id="UPA00071"/>
<dbReference type="UniPathway" id="UPA00275"/>
<dbReference type="Proteomes" id="UP000002061">
    <property type="component" value="Chromosome"/>
</dbReference>
<dbReference type="GO" id="GO:0043729">
    <property type="term" value="F:2-amino-5-formylamino-6-(5-phosphoribosylamino)pyrimidin-4(3H)-one formate-lyase activity"/>
    <property type="evidence" value="ECO:0007669"/>
    <property type="project" value="UniProtKB-EC"/>
</dbReference>
<dbReference type="GO" id="GO:0008198">
    <property type="term" value="F:ferrous iron binding"/>
    <property type="evidence" value="ECO:0007669"/>
    <property type="project" value="UniProtKB-UniRule"/>
</dbReference>
<dbReference type="GO" id="GO:0052645">
    <property type="term" value="P:F420-0 metabolic process"/>
    <property type="evidence" value="ECO:0007669"/>
    <property type="project" value="UniProtKB-UniRule"/>
</dbReference>
<dbReference type="GO" id="GO:0009231">
    <property type="term" value="P:riboflavin biosynthetic process"/>
    <property type="evidence" value="ECO:0007669"/>
    <property type="project" value="UniProtKB-UniRule"/>
</dbReference>
<dbReference type="Gene3D" id="3.40.50.10310">
    <property type="entry name" value="Creatininase"/>
    <property type="match status" value="1"/>
</dbReference>
<dbReference type="HAMAP" id="MF_02116">
    <property type="entry name" value="FAPy_deform"/>
    <property type="match status" value="1"/>
</dbReference>
<dbReference type="InterPro" id="IPR024087">
    <property type="entry name" value="Creatininase-like_sf"/>
</dbReference>
<dbReference type="InterPro" id="IPR003785">
    <property type="entry name" value="Creatininase/forma_Hydrolase"/>
</dbReference>
<dbReference type="InterPro" id="IPR024901">
    <property type="entry name" value="FAPy_deformylase"/>
</dbReference>
<dbReference type="NCBIfam" id="NF033501">
    <property type="entry name" value="ArfB_arch_rifla"/>
    <property type="match status" value="1"/>
</dbReference>
<dbReference type="PANTHER" id="PTHR35005:SF1">
    <property type="entry name" value="2-AMINO-5-FORMYLAMINO-6-RIBOSYLAMINOPYRIMIDIN-4(3H)-ONE 5'-MONOPHOSPHATE DEFORMYLASE"/>
    <property type="match status" value="1"/>
</dbReference>
<dbReference type="PANTHER" id="PTHR35005">
    <property type="entry name" value="3-DEHYDRO-SCYLLO-INOSOSE HYDROLASE"/>
    <property type="match status" value="1"/>
</dbReference>
<dbReference type="Pfam" id="PF02633">
    <property type="entry name" value="Creatininase"/>
    <property type="match status" value="1"/>
</dbReference>
<dbReference type="SUPFAM" id="SSF102215">
    <property type="entry name" value="Creatininase"/>
    <property type="match status" value="1"/>
</dbReference>
<evidence type="ECO:0000250" key="1"/>
<evidence type="ECO:0000255" key="2">
    <source>
        <dbReference type="HAMAP-Rule" id="MF_02116"/>
    </source>
</evidence>
<name>ARFB_METIM</name>
<proteinExistence type="inferred from homology"/>
<sequence>MTILRLNGGKILNEKVHEIGVIAMGSYLENHGSALPIDTDIKIASYVSLMACIKTGAKFLGTVIPSTEYSYVKHGIHNKVSDIVEYLTFLLTWAKRIGIKKVIIVNCHGGNILAEKEIKELENLINIKIKFLSFPLTHAATEELSIGYVIGIANKEKMKEHKPENYAEIGMVGLREAREKNKEIDEEAKRVEKEGVKIDEELGKKLLDEFINKVVNEITNFL</sequence>
<reference key="1">
    <citation type="submission" date="2010-04" db="EMBL/GenBank/DDBJ databases">
        <title>Complete sequence of Methanocaldococcus infernus ME.</title>
        <authorList>
            <consortium name="US DOE Joint Genome Institute"/>
            <person name="Lucas S."/>
            <person name="Copeland A."/>
            <person name="Lapidus A."/>
            <person name="Cheng J.-F."/>
            <person name="Bruce D."/>
            <person name="Goodwin L."/>
            <person name="Pitluck S."/>
            <person name="Munk A.C."/>
            <person name="Detter J.C."/>
            <person name="Han C."/>
            <person name="Tapia R."/>
            <person name="Land M."/>
            <person name="Hauser L."/>
            <person name="Kyrpides N."/>
            <person name="Mikhailova N."/>
            <person name="Sieprawska-Lupa M."/>
            <person name="Whitman W.B."/>
            <person name="Woyke T."/>
        </authorList>
    </citation>
    <scope>NUCLEOTIDE SEQUENCE [LARGE SCALE GENOMIC DNA]</scope>
    <source>
        <strain>DSM 11812 / JCM 15783 / ME</strain>
    </source>
</reference>